<reference key="1">
    <citation type="journal article" date="2008" name="Antimicrob. Agents Chemother.">
        <title>Mutated response regulator graR is responsible for phenotypic conversion of Staphylococcus aureus from heterogeneous vancomycin-intermediate resistance to vancomycin-intermediate resistance.</title>
        <authorList>
            <person name="Neoh H.-M."/>
            <person name="Cui L."/>
            <person name="Yuzawa H."/>
            <person name="Takeuchi F."/>
            <person name="Matsuo M."/>
            <person name="Hiramatsu K."/>
        </authorList>
    </citation>
    <scope>NUCLEOTIDE SEQUENCE [LARGE SCALE GENOMIC DNA]</scope>
    <source>
        <strain>Mu3 / ATCC 700698</strain>
    </source>
</reference>
<comment type="function">
    <text evidence="1">Member of the two-component regulatory system NreB/NreC involved in the control of dissimilatory nitrate/nitrite reduction in response to oxygen. Phosphorylated NreC binds to a GC-rich palindromic sequence at the promoters of the nitrate (narGHJI) and nitrite (nir) reductase operons, as well as the putative nitrate transporter gene narT, and activates their expression (By similarity).</text>
</comment>
<comment type="subcellular location">
    <subcellularLocation>
        <location evidence="4">Cytoplasm</location>
    </subcellularLocation>
</comment>
<comment type="PTM">
    <text evidence="1">Phosphorylated by NreB.</text>
</comment>
<protein>
    <recommendedName>
        <fullName>Oxygen regulatory protein NreC</fullName>
    </recommendedName>
    <alternativeName>
        <fullName>Nitrogen regulation protein C</fullName>
    </alternativeName>
</protein>
<organism>
    <name type="scientific">Staphylococcus aureus (strain Mu3 / ATCC 700698)</name>
    <dbReference type="NCBI Taxonomy" id="418127"/>
    <lineage>
        <taxon>Bacteria</taxon>
        <taxon>Bacillati</taxon>
        <taxon>Bacillota</taxon>
        <taxon>Bacilli</taxon>
        <taxon>Bacillales</taxon>
        <taxon>Staphylococcaceae</taxon>
        <taxon>Staphylococcus</taxon>
    </lineage>
</organism>
<dbReference type="EMBL" id="AP009324">
    <property type="protein sequence ID" value="BAF79258.1"/>
    <property type="molecule type" value="Genomic_DNA"/>
</dbReference>
<dbReference type="RefSeq" id="WP_000706315.1">
    <property type="nucleotide sequence ID" value="NZ_CTYB01000005.1"/>
</dbReference>
<dbReference type="SMR" id="A7X623"/>
<dbReference type="KEGG" id="saw:SAHV_2375"/>
<dbReference type="HOGENOM" id="CLU_000445_90_1_9"/>
<dbReference type="GO" id="GO:0005737">
    <property type="term" value="C:cytoplasm"/>
    <property type="evidence" value="ECO:0007669"/>
    <property type="project" value="UniProtKB-SubCell"/>
</dbReference>
<dbReference type="GO" id="GO:0003677">
    <property type="term" value="F:DNA binding"/>
    <property type="evidence" value="ECO:0007669"/>
    <property type="project" value="UniProtKB-KW"/>
</dbReference>
<dbReference type="GO" id="GO:0000160">
    <property type="term" value="P:phosphorelay signal transduction system"/>
    <property type="evidence" value="ECO:0007669"/>
    <property type="project" value="UniProtKB-KW"/>
</dbReference>
<dbReference type="GO" id="GO:0006355">
    <property type="term" value="P:regulation of DNA-templated transcription"/>
    <property type="evidence" value="ECO:0007669"/>
    <property type="project" value="InterPro"/>
</dbReference>
<dbReference type="CDD" id="cd06170">
    <property type="entry name" value="LuxR_C_like"/>
    <property type="match status" value="1"/>
</dbReference>
<dbReference type="CDD" id="cd17535">
    <property type="entry name" value="REC_NarL-like"/>
    <property type="match status" value="1"/>
</dbReference>
<dbReference type="Gene3D" id="3.40.50.2300">
    <property type="match status" value="1"/>
</dbReference>
<dbReference type="InterPro" id="IPR011006">
    <property type="entry name" value="CheY-like_superfamily"/>
</dbReference>
<dbReference type="InterPro" id="IPR016032">
    <property type="entry name" value="Sig_transdc_resp-reg_C-effctor"/>
</dbReference>
<dbReference type="InterPro" id="IPR001789">
    <property type="entry name" value="Sig_transdc_resp-reg_receiver"/>
</dbReference>
<dbReference type="InterPro" id="IPR000792">
    <property type="entry name" value="Tscrpt_reg_LuxR_C"/>
</dbReference>
<dbReference type="InterPro" id="IPR039420">
    <property type="entry name" value="WalR-like"/>
</dbReference>
<dbReference type="PANTHER" id="PTHR43214:SF37">
    <property type="entry name" value="TRANSCRIPTIONAL REGULATORY PROTEIN YDFI"/>
    <property type="match status" value="1"/>
</dbReference>
<dbReference type="PANTHER" id="PTHR43214">
    <property type="entry name" value="TWO-COMPONENT RESPONSE REGULATOR"/>
    <property type="match status" value="1"/>
</dbReference>
<dbReference type="Pfam" id="PF00196">
    <property type="entry name" value="GerE"/>
    <property type="match status" value="1"/>
</dbReference>
<dbReference type="Pfam" id="PF00072">
    <property type="entry name" value="Response_reg"/>
    <property type="match status" value="1"/>
</dbReference>
<dbReference type="PRINTS" id="PR00038">
    <property type="entry name" value="HTHLUXR"/>
</dbReference>
<dbReference type="SMART" id="SM00421">
    <property type="entry name" value="HTH_LUXR"/>
    <property type="match status" value="1"/>
</dbReference>
<dbReference type="SMART" id="SM00448">
    <property type="entry name" value="REC"/>
    <property type="match status" value="1"/>
</dbReference>
<dbReference type="SUPFAM" id="SSF46894">
    <property type="entry name" value="C-terminal effector domain of the bipartite response regulators"/>
    <property type="match status" value="1"/>
</dbReference>
<dbReference type="SUPFAM" id="SSF52172">
    <property type="entry name" value="CheY-like"/>
    <property type="match status" value="1"/>
</dbReference>
<dbReference type="PROSITE" id="PS00622">
    <property type="entry name" value="HTH_LUXR_1"/>
    <property type="match status" value="1"/>
</dbReference>
<dbReference type="PROSITE" id="PS50043">
    <property type="entry name" value="HTH_LUXR_2"/>
    <property type="match status" value="1"/>
</dbReference>
<dbReference type="PROSITE" id="PS50110">
    <property type="entry name" value="RESPONSE_REGULATORY"/>
    <property type="match status" value="1"/>
</dbReference>
<evidence type="ECO:0000250" key="1"/>
<evidence type="ECO:0000255" key="2">
    <source>
        <dbReference type="PROSITE-ProRule" id="PRU00169"/>
    </source>
</evidence>
<evidence type="ECO:0000255" key="3">
    <source>
        <dbReference type="PROSITE-ProRule" id="PRU00411"/>
    </source>
</evidence>
<evidence type="ECO:0000305" key="4"/>
<proteinExistence type="inferred from homology"/>
<feature type="chain" id="PRO_0000349348" description="Oxygen regulatory protein NreC">
    <location>
        <begin position="1"/>
        <end position="217"/>
    </location>
</feature>
<feature type="domain" description="Response regulatory" evidence="2">
    <location>
        <begin position="2"/>
        <end position="119"/>
    </location>
</feature>
<feature type="domain" description="HTH luxR-type" evidence="3">
    <location>
        <begin position="148"/>
        <end position="213"/>
    </location>
</feature>
<feature type="DNA-binding region" description="H-T-H motif" evidence="3">
    <location>
        <begin position="172"/>
        <end position="191"/>
    </location>
</feature>
<feature type="modified residue" description="4-aspartylphosphate" evidence="2">
    <location>
        <position position="53"/>
    </location>
</feature>
<sequence>MKIVIADDHAVVRTGFSMILNYQNDMEVVATAADGVEAYQKVMEYKPDVLLMDLSMPPGESGLIATSKIADSFPETKILILTMFDDEEYLFHVLRNGAKGYILKNAPDEQLLLAIRTVYKGETYVDMKLTTSLVNEFVSNSNQDTANTTDPFKILSKRELEILPLIAKGYGNKEIAEKLFVSVKTVEAHKTHIMTKLGLKSKPELVEYALKKKLLEF</sequence>
<gene>
    <name type="primary">nreC</name>
    <name type="ordered locus">SAHV_2375</name>
</gene>
<name>NREC_STAA1</name>
<accession>A7X623</accession>
<keyword id="KW-0010">Activator</keyword>
<keyword id="KW-0963">Cytoplasm</keyword>
<keyword id="KW-0238">DNA-binding</keyword>
<keyword id="KW-0597">Phosphoprotein</keyword>
<keyword id="KW-0804">Transcription</keyword>
<keyword id="KW-0805">Transcription regulation</keyword>
<keyword id="KW-0902">Two-component regulatory system</keyword>